<evidence type="ECO:0000255" key="1"/>
<evidence type="ECO:0000269" key="2">
    <source>
    </source>
</evidence>
<evidence type="ECO:0000305" key="3"/>
<accession>Q9URX1</accession>
<protein>
    <recommendedName>
        <fullName>UNC93-like protein C922.05c</fullName>
    </recommendedName>
</protein>
<comment type="subcellular location">
    <subcellularLocation>
        <location evidence="2">Cytoplasm</location>
    </subcellularLocation>
    <subcellularLocation>
        <location evidence="3">Membrane</location>
        <topology evidence="3">Multi-pass membrane protein</topology>
    </subcellularLocation>
</comment>
<comment type="similarity">
    <text evidence="3">Belongs to the unc-93 family.</text>
</comment>
<name>YLX5_SCHPO</name>
<proteinExistence type="inferred from homology"/>
<keyword id="KW-0963">Cytoplasm</keyword>
<keyword id="KW-0472">Membrane</keyword>
<keyword id="KW-1185">Reference proteome</keyword>
<keyword id="KW-0812">Transmembrane</keyword>
<keyword id="KW-1133">Transmembrane helix</keyword>
<dbReference type="EMBL" id="CU329670">
    <property type="protein sequence ID" value="CAB63552.1"/>
    <property type="molecule type" value="Genomic_DNA"/>
</dbReference>
<dbReference type="PIR" id="T50270">
    <property type="entry name" value="T50270"/>
</dbReference>
<dbReference type="RefSeq" id="NP_595005.1">
    <property type="nucleotide sequence ID" value="NM_001020436.2"/>
</dbReference>
<dbReference type="SMR" id="Q9URX1"/>
<dbReference type="BioGRID" id="279972">
    <property type="interactions" value="4"/>
</dbReference>
<dbReference type="FunCoup" id="Q9URX1">
    <property type="interactions" value="2"/>
</dbReference>
<dbReference type="PaxDb" id="4896-SPAC922.05c.1"/>
<dbReference type="EnsemblFungi" id="SPAC922.05c.1">
    <property type="protein sequence ID" value="SPAC922.05c.1:pep"/>
    <property type="gene ID" value="SPAC922.05c"/>
</dbReference>
<dbReference type="KEGG" id="spo:2543555"/>
<dbReference type="PomBase" id="SPAC922.05c"/>
<dbReference type="VEuPathDB" id="FungiDB:SPAC922.05c"/>
<dbReference type="eggNOG" id="KOG3098">
    <property type="taxonomic scope" value="Eukaryota"/>
</dbReference>
<dbReference type="HOGENOM" id="CLU_030884_1_2_1"/>
<dbReference type="InParanoid" id="Q9URX1"/>
<dbReference type="OMA" id="AYWFMGA"/>
<dbReference type="PhylomeDB" id="Q9URX1"/>
<dbReference type="PRO" id="PR:Q9URX1"/>
<dbReference type="Proteomes" id="UP000002485">
    <property type="component" value="Chromosome I"/>
</dbReference>
<dbReference type="GO" id="GO:0005737">
    <property type="term" value="C:cytoplasm"/>
    <property type="evidence" value="ECO:0007005"/>
    <property type="project" value="PomBase"/>
</dbReference>
<dbReference type="GO" id="GO:0016020">
    <property type="term" value="C:membrane"/>
    <property type="evidence" value="ECO:0007669"/>
    <property type="project" value="UniProtKB-SubCell"/>
</dbReference>
<dbReference type="GO" id="GO:0022857">
    <property type="term" value="F:transmembrane transporter activity"/>
    <property type="evidence" value="ECO:0000255"/>
    <property type="project" value="PomBase"/>
</dbReference>
<dbReference type="CDD" id="cd06178">
    <property type="entry name" value="MFS_unc93-like"/>
    <property type="match status" value="1"/>
</dbReference>
<dbReference type="FunFam" id="1.20.1250.20:FF:000726">
    <property type="entry name" value="DUF895 domain membrane protein"/>
    <property type="match status" value="1"/>
</dbReference>
<dbReference type="Gene3D" id="1.20.1250.20">
    <property type="entry name" value="MFS general substrate transporter like domains"/>
    <property type="match status" value="1"/>
</dbReference>
<dbReference type="InterPro" id="IPR011701">
    <property type="entry name" value="MFS"/>
</dbReference>
<dbReference type="InterPro" id="IPR036259">
    <property type="entry name" value="MFS_trans_sf"/>
</dbReference>
<dbReference type="InterPro" id="IPR051617">
    <property type="entry name" value="UNC-93-like_regulator"/>
</dbReference>
<dbReference type="PANTHER" id="PTHR23294">
    <property type="entry name" value="ET TRANSLATION PRODUCT-RELATED"/>
    <property type="match status" value="1"/>
</dbReference>
<dbReference type="PANTHER" id="PTHR23294:SF59">
    <property type="entry name" value="UNC93-LIKE PROTEIN C922.05C"/>
    <property type="match status" value="1"/>
</dbReference>
<dbReference type="Pfam" id="PF07690">
    <property type="entry name" value="MFS_1"/>
    <property type="match status" value="1"/>
</dbReference>
<dbReference type="SUPFAM" id="SSF103473">
    <property type="entry name" value="MFS general substrate transporter"/>
    <property type="match status" value="1"/>
</dbReference>
<sequence length="504" mass="55790">MSSDNLDISMEKKYSADVDVEKAPTPEYGEVETAPLSQSSWIYRRPRIGRFKSLAYGSALTQTIIVSWVCFLCPGMFNALSGLGGGGEVNADVANDANVALYSTFAGLGFFAGSICNLIGVKLTLAIGGTGYSVYTASLLCYKHVYNRGFVIFGGCYLGLTAGMLWAAQGAVIMSYPREENKARYIAIFWGIFNLGAVIGSIVPLAQTMHSSVNSVGDGTYAGFIVLMAVGSALALFMVSPEKTVKEDGKFVHIEKSMGWKKELLGLVQTLYKEYWVLLLFPMFFSSNWFTTYQFNDFNLAYFNIRTRSLNNLLYWFAQIMGSAVAALFLDWQRFNRVIRARVGWGLVFVLICVIWGGGLAFQLKYTRKSVAESDFVVTDFTHRGYTGYAFLYIFYGMLDAIFQSYAYWIIGSLSNDTNKLAVYMGFYKSLQSAGAAITYRMDTLNIPYMNYFASCWALLCGSLIVASPVIWKKIKLTTEGIEDEIPPLANGLAVDGPVVPLKE</sequence>
<organism>
    <name type="scientific">Schizosaccharomyces pombe (strain 972 / ATCC 24843)</name>
    <name type="common">Fission yeast</name>
    <dbReference type="NCBI Taxonomy" id="284812"/>
    <lineage>
        <taxon>Eukaryota</taxon>
        <taxon>Fungi</taxon>
        <taxon>Dikarya</taxon>
        <taxon>Ascomycota</taxon>
        <taxon>Taphrinomycotina</taxon>
        <taxon>Schizosaccharomycetes</taxon>
        <taxon>Schizosaccharomycetales</taxon>
        <taxon>Schizosaccharomycetaceae</taxon>
        <taxon>Schizosaccharomyces</taxon>
    </lineage>
</organism>
<gene>
    <name type="ORF">SPAC922.05c</name>
</gene>
<reference key="1">
    <citation type="journal article" date="2002" name="Nature">
        <title>The genome sequence of Schizosaccharomyces pombe.</title>
        <authorList>
            <person name="Wood V."/>
            <person name="Gwilliam R."/>
            <person name="Rajandream M.A."/>
            <person name="Lyne M.H."/>
            <person name="Lyne R."/>
            <person name="Stewart A."/>
            <person name="Sgouros J.G."/>
            <person name="Peat N."/>
            <person name="Hayles J."/>
            <person name="Baker S.G."/>
            <person name="Basham D."/>
            <person name="Bowman S."/>
            <person name="Brooks K."/>
            <person name="Brown D."/>
            <person name="Brown S."/>
            <person name="Chillingworth T."/>
            <person name="Churcher C.M."/>
            <person name="Collins M."/>
            <person name="Connor R."/>
            <person name="Cronin A."/>
            <person name="Davis P."/>
            <person name="Feltwell T."/>
            <person name="Fraser A."/>
            <person name="Gentles S."/>
            <person name="Goble A."/>
            <person name="Hamlin N."/>
            <person name="Harris D.E."/>
            <person name="Hidalgo J."/>
            <person name="Hodgson G."/>
            <person name="Holroyd S."/>
            <person name="Hornsby T."/>
            <person name="Howarth S."/>
            <person name="Huckle E.J."/>
            <person name="Hunt S."/>
            <person name="Jagels K."/>
            <person name="James K.D."/>
            <person name="Jones L."/>
            <person name="Jones M."/>
            <person name="Leather S."/>
            <person name="McDonald S."/>
            <person name="McLean J."/>
            <person name="Mooney P."/>
            <person name="Moule S."/>
            <person name="Mungall K.L."/>
            <person name="Murphy L.D."/>
            <person name="Niblett D."/>
            <person name="Odell C."/>
            <person name="Oliver K."/>
            <person name="O'Neil S."/>
            <person name="Pearson D."/>
            <person name="Quail M.A."/>
            <person name="Rabbinowitsch E."/>
            <person name="Rutherford K.M."/>
            <person name="Rutter S."/>
            <person name="Saunders D."/>
            <person name="Seeger K."/>
            <person name="Sharp S."/>
            <person name="Skelton J."/>
            <person name="Simmonds M.N."/>
            <person name="Squares R."/>
            <person name="Squares S."/>
            <person name="Stevens K."/>
            <person name="Taylor K."/>
            <person name="Taylor R.G."/>
            <person name="Tivey A."/>
            <person name="Walsh S.V."/>
            <person name="Warren T."/>
            <person name="Whitehead S."/>
            <person name="Woodward J.R."/>
            <person name="Volckaert G."/>
            <person name="Aert R."/>
            <person name="Robben J."/>
            <person name="Grymonprez B."/>
            <person name="Weltjens I."/>
            <person name="Vanstreels E."/>
            <person name="Rieger M."/>
            <person name="Schaefer M."/>
            <person name="Mueller-Auer S."/>
            <person name="Gabel C."/>
            <person name="Fuchs M."/>
            <person name="Duesterhoeft A."/>
            <person name="Fritzc C."/>
            <person name="Holzer E."/>
            <person name="Moestl D."/>
            <person name="Hilbert H."/>
            <person name="Borzym K."/>
            <person name="Langer I."/>
            <person name="Beck A."/>
            <person name="Lehrach H."/>
            <person name="Reinhardt R."/>
            <person name="Pohl T.M."/>
            <person name="Eger P."/>
            <person name="Zimmermann W."/>
            <person name="Wedler H."/>
            <person name="Wambutt R."/>
            <person name="Purnelle B."/>
            <person name="Goffeau A."/>
            <person name="Cadieu E."/>
            <person name="Dreano S."/>
            <person name="Gloux S."/>
            <person name="Lelaure V."/>
            <person name="Mottier S."/>
            <person name="Galibert F."/>
            <person name="Aves S.J."/>
            <person name="Xiang Z."/>
            <person name="Hunt C."/>
            <person name="Moore K."/>
            <person name="Hurst S.M."/>
            <person name="Lucas M."/>
            <person name="Rochet M."/>
            <person name="Gaillardin C."/>
            <person name="Tallada V.A."/>
            <person name="Garzon A."/>
            <person name="Thode G."/>
            <person name="Daga R.R."/>
            <person name="Cruzado L."/>
            <person name="Jimenez J."/>
            <person name="Sanchez M."/>
            <person name="del Rey F."/>
            <person name="Benito J."/>
            <person name="Dominguez A."/>
            <person name="Revuelta J.L."/>
            <person name="Moreno S."/>
            <person name="Armstrong J."/>
            <person name="Forsburg S.L."/>
            <person name="Cerutti L."/>
            <person name="Lowe T."/>
            <person name="McCombie W.R."/>
            <person name="Paulsen I."/>
            <person name="Potashkin J."/>
            <person name="Shpakovski G.V."/>
            <person name="Ussery D."/>
            <person name="Barrell B.G."/>
            <person name="Nurse P."/>
        </authorList>
    </citation>
    <scope>NUCLEOTIDE SEQUENCE [LARGE SCALE GENOMIC DNA]</scope>
    <source>
        <strain>972 / ATCC 24843</strain>
    </source>
</reference>
<reference key="2">
    <citation type="journal article" date="2006" name="Nat. Biotechnol.">
        <title>ORFeome cloning and global analysis of protein localization in the fission yeast Schizosaccharomyces pombe.</title>
        <authorList>
            <person name="Matsuyama A."/>
            <person name="Arai R."/>
            <person name="Yashiroda Y."/>
            <person name="Shirai A."/>
            <person name="Kamata A."/>
            <person name="Sekido S."/>
            <person name="Kobayashi Y."/>
            <person name="Hashimoto A."/>
            <person name="Hamamoto M."/>
            <person name="Hiraoka Y."/>
            <person name="Horinouchi S."/>
            <person name="Yoshida M."/>
        </authorList>
    </citation>
    <scope>SUBCELLULAR LOCATION [LARGE SCALE ANALYSIS]</scope>
</reference>
<feature type="chain" id="PRO_0000372418" description="UNC93-like protein C922.05c">
    <location>
        <begin position="1"/>
        <end position="504"/>
    </location>
</feature>
<feature type="transmembrane region" description="Helical" evidence="1">
    <location>
        <begin position="64"/>
        <end position="84"/>
    </location>
</feature>
<feature type="transmembrane region" description="Helical" evidence="1">
    <location>
        <begin position="97"/>
        <end position="116"/>
    </location>
</feature>
<feature type="transmembrane region" description="Helical" evidence="1">
    <location>
        <begin position="123"/>
        <end position="145"/>
    </location>
</feature>
<feature type="transmembrane region" description="Helical" evidence="1">
    <location>
        <begin position="149"/>
        <end position="169"/>
    </location>
</feature>
<feature type="transmembrane region" description="Helical" evidence="1">
    <location>
        <begin position="186"/>
        <end position="206"/>
    </location>
</feature>
<feature type="transmembrane region" description="Helical" evidence="1">
    <location>
        <begin position="219"/>
        <end position="239"/>
    </location>
</feature>
<feature type="transmembrane region" description="Helical" evidence="1">
    <location>
        <begin position="275"/>
        <end position="293"/>
    </location>
</feature>
<feature type="transmembrane region" description="Helical" evidence="1">
    <location>
        <begin position="310"/>
        <end position="330"/>
    </location>
</feature>
<feature type="transmembrane region" description="Helical" evidence="1">
    <location>
        <begin position="343"/>
        <end position="363"/>
    </location>
</feature>
<feature type="transmembrane region" description="Helical" evidence="1">
    <location>
        <begin position="391"/>
        <end position="411"/>
    </location>
</feature>
<feature type="transmembrane region" description="Helical" evidence="1">
    <location>
        <begin position="452"/>
        <end position="472"/>
    </location>
</feature>